<dbReference type="EMBL" id="DQ482913">
    <property type="protein sequence ID" value="ABE68916.1"/>
    <property type="molecule type" value="Genomic_DNA"/>
</dbReference>
<dbReference type="RefSeq" id="NP_001074255.1">
    <property type="nucleotide sequence ID" value="NM_001080786.1"/>
</dbReference>
<dbReference type="SMR" id="Q0Q7U8"/>
<dbReference type="STRING" id="9598.ENSPTRP00000060120"/>
<dbReference type="PaxDb" id="9598-ENSPTRP00000034226"/>
<dbReference type="GeneID" id="740079"/>
<dbReference type="KEGG" id="ptr:740079"/>
<dbReference type="CTD" id="83650"/>
<dbReference type="eggNOG" id="ENOG502RCFC">
    <property type="taxonomic scope" value="Eukaryota"/>
</dbReference>
<dbReference type="HOGENOM" id="CLU_055637_0_0_1"/>
<dbReference type="InParanoid" id="Q0Q7U8"/>
<dbReference type="OrthoDB" id="16895at9604"/>
<dbReference type="TreeFam" id="TF331838"/>
<dbReference type="Proteomes" id="UP000002277">
    <property type="component" value="Unplaced"/>
</dbReference>
<dbReference type="GO" id="GO:0016020">
    <property type="term" value="C:membrane"/>
    <property type="evidence" value="ECO:0000318"/>
    <property type="project" value="GO_Central"/>
</dbReference>
<dbReference type="InterPro" id="IPR000620">
    <property type="entry name" value="EamA_dom"/>
</dbReference>
<dbReference type="PANTHER" id="PTHR22911">
    <property type="entry name" value="ACYL-MALONYL CONDENSING ENZYME-RELATED"/>
    <property type="match status" value="1"/>
</dbReference>
<dbReference type="PANTHER" id="PTHR22911:SF32">
    <property type="entry name" value="SOLUTE CARRIER FAMILY 35 MEMBER G5-RELATED"/>
    <property type="match status" value="1"/>
</dbReference>
<dbReference type="Pfam" id="PF00892">
    <property type="entry name" value="EamA"/>
    <property type="match status" value="2"/>
</dbReference>
<dbReference type="SUPFAM" id="SSF103481">
    <property type="entry name" value="Multidrug resistance efflux transporter EmrE"/>
    <property type="match status" value="2"/>
</dbReference>
<protein>
    <recommendedName>
        <fullName>Solute carrier family 35 member G5</fullName>
    </recommendedName>
    <alternativeName>
        <fullName>Acyl-malonyl-condensing enzyme 1-like protein 2</fullName>
    </alternativeName>
</protein>
<sequence length="338" mass="35070">MAGSHPYFNLPDSTHPSPPSAPPSLRWCQRCQPSDATNGLLVALLGGGLPAGFVGPLSRMAYQASNLPSLELLICRCLFHLPIALPLKLHGDPLLGPPDIRGRACFCALLNVLSIGCAYSAVQVVPAGNAATVRKGSSTVCSAILTLCLESQGLSGYDWCGLLGSILGLIIIVGPGLWTLQEGTMGVYTALGYVQAFLGGLALSLGLLVYRSLHFPSCLPTVAFLSGLVGLLGSVPGLFVLQTPVLPSDLLSWSCVGAVGILALVSFTCVGYAVTKAHPALVCAVLHSEVVVALILQYYVLHETVAPSDIMGAGIVLGSIAIITARNLSCERTGKVEE</sequence>
<feature type="chain" id="PRO_0000269558" description="Solute carrier family 35 member G5">
    <location>
        <begin position="1"/>
        <end position="338"/>
    </location>
</feature>
<feature type="transmembrane region" description="Helical" evidence="1">
    <location>
        <begin position="37"/>
        <end position="57"/>
    </location>
</feature>
<feature type="transmembrane region" description="Helical" evidence="1">
    <location>
        <begin position="67"/>
        <end position="87"/>
    </location>
</feature>
<feature type="transmembrane region" description="Helical" evidence="1">
    <location>
        <begin position="105"/>
        <end position="125"/>
    </location>
</feature>
<feature type="transmembrane region" description="Helical" evidence="1">
    <location>
        <begin position="160"/>
        <end position="180"/>
    </location>
</feature>
<feature type="transmembrane region" description="Helical" evidence="1">
    <location>
        <begin position="190"/>
        <end position="210"/>
    </location>
</feature>
<feature type="transmembrane region" description="Helical" evidence="1">
    <location>
        <begin position="221"/>
        <end position="241"/>
    </location>
</feature>
<feature type="transmembrane region" description="Helical" evidence="1">
    <location>
        <begin position="250"/>
        <end position="270"/>
    </location>
</feature>
<feature type="transmembrane region" description="Helical" evidence="1">
    <location>
        <begin position="281"/>
        <end position="301"/>
    </location>
</feature>
<feature type="transmembrane region" description="Helical" evidence="1">
    <location>
        <begin position="305"/>
        <end position="325"/>
    </location>
</feature>
<feature type="domain" description="EamA 1">
    <location>
        <begin position="49"/>
        <end position="174"/>
    </location>
</feature>
<feature type="domain" description="EamA 2">
    <location>
        <begin position="272"/>
        <end position="325"/>
    </location>
</feature>
<feature type="region of interest" description="Disordered" evidence="2">
    <location>
        <begin position="1"/>
        <end position="21"/>
    </location>
</feature>
<gene>
    <name type="primary">SLC35G5</name>
    <name type="synonym">AMAC1L2</name>
</gene>
<name>S35G5_PANTR</name>
<accession>Q0Q7U8</accession>
<organism>
    <name type="scientific">Pan troglodytes</name>
    <name type="common">Chimpanzee</name>
    <dbReference type="NCBI Taxonomy" id="9598"/>
    <lineage>
        <taxon>Eukaryota</taxon>
        <taxon>Metazoa</taxon>
        <taxon>Chordata</taxon>
        <taxon>Craniata</taxon>
        <taxon>Vertebrata</taxon>
        <taxon>Euteleostomi</taxon>
        <taxon>Mammalia</taxon>
        <taxon>Eutheria</taxon>
        <taxon>Euarchontoglires</taxon>
        <taxon>Primates</taxon>
        <taxon>Haplorrhini</taxon>
        <taxon>Catarrhini</taxon>
        <taxon>Hominidae</taxon>
        <taxon>Pan</taxon>
    </lineage>
</organism>
<keyword id="KW-0472">Membrane</keyword>
<keyword id="KW-1185">Reference proteome</keyword>
<keyword id="KW-0677">Repeat</keyword>
<keyword id="KW-0812">Transmembrane</keyword>
<keyword id="KW-1133">Transmembrane helix</keyword>
<evidence type="ECO:0000255" key="1"/>
<evidence type="ECO:0000256" key="2">
    <source>
        <dbReference type="SAM" id="MobiDB-lite"/>
    </source>
</evidence>
<evidence type="ECO:0000305" key="3"/>
<comment type="subcellular location">
    <subcellularLocation>
        <location evidence="3">Membrane</location>
        <topology evidence="3">Multi-pass membrane protein</topology>
    </subcellularLocation>
</comment>
<comment type="miscellaneous">
    <text>The gene encoding this protein appears to have arisen by SVA-mediated retrotransposition of the SLC35G6 gene in the primate lineage.</text>
</comment>
<comment type="similarity">
    <text evidence="3">Belongs to the SLC35G solute transporter family.</text>
</comment>
<proteinExistence type="inferred from homology"/>
<reference key="1">
    <citation type="journal article" date="2006" name="Proc. Natl. Acad. Sci. U.S.A.">
        <title>Emergence of primate genes by retrotransposon-mediated sequence transduction.</title>
        <authorList>
            <person name="Xing J."/>
            <person name="Wang H."/>
            <person name="Belancio V.P."/>
            <person name="Cordaux R."/>
            <person name="Deininger P.L."/>
            <person name="Batzer M.A."/>
        </authorList>
    </citation>
    <scope>NUCLEOTIDE SEQUENCE [GENOMIC DNA]</scope>
</reference>